<protein>
    <recommendedName>
        <fullName evidence="1">Small ribosomal subunit protein uS10</fullName>
    </recommendedName>
    <alternativeName>
        <fullName evidence="2">30S ribosomal protein S10</fullName>
    </alternativeName>
</protein>
<accession>P66345</accession>
<accession>Q9A1X5</accession>
<keyword id="KW-1185">Reference proteome</keyword>
<keyword id="KW-0687">Ribonucleoprotein</keyword>
<keyword id="KW-0689">Ribosomal protein</keyword>
<sequence length="102" mass="11614">MANKKIRIRLKAYEHRTLDTAAEKIVETATRTGATVAGPVPLPTERSLYTIIRATHKYKDSREQFEMRTHKRLVDIINPTQKTVDALMKLDLPSGVNVEIKL</sequence>
<reference key="1">
    <citation type="journal article" date="2002" name="Proc. Natl. Acad. Sci. U.S.A.">
        <title>Complete genome sequence and comparative genomic analysis of an emerging human pathogen, serotype V Streptococcus agalactiae.</title>
        <authorList>
            <person name="Tettelin H."/>
            <person name="Masignani V."/>
            <person name="Cieslewicz M.J."/>
            <person name="Eisen J.A."/>
            <person name="Peterson S.N."/>
            <person name="Wessels M.R."/>
            <person name="Paulsen I.T."/>
            <person name="Nelson K.E."/>
            <person name="Margarit I."/>
            <person name="Read T.D."/>
            <person name="Madoff L.C."/>
            <person name="Wolf A.M."/>
            <person name="Beanan M.J."/>
            <person name="Brinkac L.M."/>
            <person name="Daugherty S.C."/>
            <person name="DeBoy R.T."/>
            <person name="Durkin A.S."/>
            <person name="Kolonay J.F."/>
            <person name="Madupu R."/>
            <person name="Lewis M.R."/>
            <person name="Radune D."/>
            <person name="Fedorova N.B."/>
            <person name="Scanlan D."/>
            <person name="Khouri H.M."/>
            <person name="Mulligan S."/>
            <person name="Carty H.A."/>
            <person name="Cline R.T."/>
            <person name="Van Aken S.E."/>
            <person name="Gill J."/>
            <person name="Scarselli M."/>
            <person name="Mora M."/>
            <person name="Iacobini E.T."/>
            <person name="Brettoni C."/>
            <person name="Galli G."/>
            <person name="Mariani M."/>
            <person name="Vegni F."/>
            <person name="Maione D."/>
            <person name="Rinaudo D."/>
            <person name="Rappuoli R."/>
            <person name="Telford J.L."/>
            <person name="Kasper D.L."/>
            <person name="Grandi G."/>
            <person name="Fraser C.M."/>
        </authorList>
    </citation>
    <scope>NUCLEOTIDE SEQUENCE [LARGE SCALE GENOMIC DNA]</scope>
    <source>
        <strain>ATCC BAA-611 / 2603 V/R</strain>
    </source>
</reference>
<feature type="chain" id="PRO_0000146614" description="Small ribosomal subunit protein uS10">
    <location>
        <begin position="1"/>
        <end position="102"/>
    </location>
</feature>
<name>RS10_STRA5</name>
<dbReference type="EMBL" id="AE009948">
    <property type="protein sequence ID" value="AAM98965.1"/>
    <property type="molecule type" value="Genomic_DNA"/>
</dbReference>
<dbReference type="RefSeq" id="NP_687093.1">
    <property type="nucleotide sequence ID" value="NC_004116.1"/>
</dbReference>
<dbReference type="RefSeq" id="WP_001284518.1">
    <property type="nucleotide sequence ID" value="NC_004116.1"/>
</dbReference>
<dbReference type="SMR" id="P66345"/>
<dbReference type="STRING" id="208435.SAG0057"/>
<dbReference type="GeneID" id="69900025"/>
<dbReference type="KEGG" id="sag:SAG0057"/>
<dbReference type="PATRIC" id="fig|208435.3.peg.56"/>
<dbReference type="HOGENOM" id="CLU_122625_1_3_9"/>
<dbReference type="OrthoDB" id="9804464at2"/>
<dbReference type="Proteomes" id="UP000000821">
    <property type="component" value="Chromosome"/>
</dbReference>
<dbReference type="GO" id="GO:1990904">
    <property type="term" value="C:ribonucleoprotein complex"/>
    <property type="evidence" value="ECO:0007669"/>
    <property type="project" value="UniProtKB-KW"/>
</dbReference>
<dbReference type="GO" id="GO:0005840">
    <property type="term" value="C:ribosome"/>
    <property type="evidence" value="ECO:0007669"/>
    <property type="project" value="UniProtKB-KW"/>
</dbReference>
<dbReference type="GO" id="GO:0003735">
    <property type="term" value="F:structural constituent of ribosome"/>
    <property type="evidence" value="ECO:0007669"/>
    <property type="project" value="InterPro"/>
</dbReference>
<dbReference type="GO" id="GO:0000049">
    <property type="term" value="F:tRNA binding"/>
    <property type="evidence" value="ECO:0007669"/>
    <property type="project" value="UniProtKB-UniRule"/>
</dbReference>
<dbReference type="GO" id="GO:0006412">
    <property type="term" value="P:translation"/>
    <property type="evidence" value="ECO:0007669"/>
    <property type="project" value="UniProtKB-UniRule"/>
</dbReference>
<dbReference type="FunFam" id="3.30.70.600:FF:000001">
    <property type="entry name" value="30S ribosomal protein S10"/>
    <property type="match status" value="1"/>
</dbReference>
<dbReference type="Gene3D" id="3.30.70.600">
    <property type="entry name" value="Ribosomal protein S10 domain"/>
    <property type="match status" value="1"/>
</dbReference>
<dbReference type="HAMAP" id="MF_00508">
    <property type="entry name" value="Ribosomal_uS10"/>
    <property type="match status" value="1"/>
</dbReference>
<dbReference type="InterPro" id="IPR001848">
    <property type="entry name" value="Ribosomal_uS10"/>
</dbReference>
<dbReference type="InterPro" id="IPR018268">
    <property type="entry name" value="Ribosomal_uS10_CS"/>
</dbReference>
<dbReference type="InterPro" id="IPR027486">
    <property type="entry name" value="Ribosomal_uS10_dom"/>
</dbReference>
<dbReference type="InterPro" id="IPR036838">
    <property type="entry name" value="Ribosomal_uS10_dom_sf"/>
</dbReference>
<dbReference type="NCBIfam" id="NF001861">
    <property type="entry name" value="PRK00596.1"/>
    <property type="match status" value="1"/>
</dbReference>
<dbReference type="NCBIfam" id="TIGR01049">
    <property type="entry name" value="rpsJ_bact"/>
    <property type="match status" value="1"/>
</dbReference>
<dbReference type="PANTHER" id="PTHR11700">
    <property type="entry name" value="30S RIBOSOMAL PROTEIN S10 FAMILY MEMBER"/>
    <property type="match status" value="1"/>
</dbReference>
<dbReference type="Pfam" id="PF00338">
    <property type="entry name" value="Ribosomal_S10"/>
    <property type="match status" value="1"/>
</dbReference>
<dbReference type="PRINTS" id="PR00971">
    <property type="entry name" value="RIBOSOMALS10"/>
</dbReference>
<dbReference type="SMART" id="SM01403">
    <property type="entry name" value="Ribosomal_S10"/>
    <property type="match status" value="1"/>
</dbReference>
<dbReference type="SUPFAM" id="SSF54999">
    <property type="entry name" value="Ribosomal protein S10"/>
    <property type="match status" value="1"/>
</dbReference>
<dbReference type="PROSITE" id="PS00361">
    <property type="entry name" value="RIBOSOMAL_S10"/>
    <property type="match status" value="1"/>
</dbReference>
<evidence type="ECO:0000255" key="1">
    <source>
        <dbReference type="HAMAP-Rule" id="MF_00508"/>
    </source>
</evidence>
<evidence type="ECO:0000305" key="2"/>
<gene>
    <name evidence="1" type="primary">rpsJ</name>
    <name type="ordered locus">SAG0057</name>
</gene>
<comment type="function">
    <text evidence="1">Involved in the binding of tRNA to the ribosomes.</text>
</comment>
<comment type="subunit">
    <text evidence="1">Part of the 30S ribosomal subunit.</text>
</comment>
<comment type="similarity">
    <text evidence="1">Belongs to the universal ribosomal protein uS10 family.</text>
</comment>
<organism>
    <name type="scientific">Streptococcus agalactiae serotype V (strain ATCC BAA-611 / 2603 V/R)</name>
    <dbReference type="NCBI Taxonomy" id="208435"/>
    <lineage>
        <taxon>Bacteria</taxon>
        <taxon>Bacillati</taxon>
        <taxon>Bacillota</taxon>
        <taxon>Bacilli</taxon>
        <taxon>Lactobacillales</taxon>
        <taxon>Streptococcaceae</taxon>
        <taxon>Streptococcus</taxon>
    </lineage>
</organism>
<proteinExistence type="inferred from homology"/>